<gene>
    <name evidence="1" type="primary">purQ</name>
    <name type="ordered locus">Msp_1193</name>
</gene>
<reference key="1">
    <citation type="journal article" date="2006" name="J. Bacteriol.">
        <title>The genome sequence of Methanosphaera stadtmanae reveals why this human intestinal archaeon is restricted to methanol and H2 for methane formation and ATP synthesis.</title>
        <authorList>
            <person name="Fricke W.F."/>
            <person name="Seedorf H."/>
            <person name="Henne A."/>
            <person name="Kruer M."/>
            <person name="Liesegang H."/>
            <person name="Hedderich R."/>
            <person name="Gottschalk G."/>
            <person name="Thauer R.K."/>
        </authorList>
    </citation>
    <scope>NUCLEOTIDE SEQUENCE [LARGE SCALE GENOMIC DNA]</scope>
    <source>
        <strain>ATCC 43021 / DSM 3091 / JCM 11832 / MCB-3</strain>
    </source>
</reference>
<sequence length="221" mass="24512">MTDVADVNVGIIRFPGTNCDRDIEYAVNLVGANSHYIYWNETDLSQMDVVIIPGGFSYGDYLRAGSIAGITPIIDAIKDFAKKENPVLGICNGAQILGEIDLVPGVFIENENAKFICKSKKLKVNTTRTPFTKLYKKNEVIDLPIAHKEGRYYTDNLETLYDNNQIVLTFEDGNPNGSLDNITGVCNVDGNVVAVMPHPERAVEKLLRSEDGLKFFKSFLD</sequence>
<keyword id="KW-0067">ATP-binding</keyword>
<keyword id="KW-0963">Cytoplasm</keyword>
<keyword id="KW-0315">Glutamine amidotransferase</keyword>
<keyword id="KW-0378">Hydrolase</keyword>
<keyword id="KW-0436">Ligase</keyword>
<keyword id="KW-0547">Nucleotide-binding</keyword>
<keyword id="KW-0658">Purine biosynthesis</keyword>
<keyword id="KW-1185">Reference proteome</keyword>
<proteinExistence type="inferred from homology"/>
<dbReference type="EC" id="6.3.5.3" evidence="1"/>
<dbReference type="EC" id="3.5.1.2" evidence="1"/>
<dbReference type="EMBL" id="CP000102">
    <property type="protein sequence ID" value="ABC57574.1"/>
    <property type="molecule type" value="Genomic_DNA"/>
</dbReference>
<dbReference type="RefSeq" id="WP_011406773.1">
    <property type="nucleotide sequence ID" value="NC_007681.1"/>
</dbReference>
<dbReference type="SMR" id="Q2NF29"/>
<dbReference type="STRING" id="339860.Msp_1193"/>
<dbReference type="GeneID" id="41325762"/>
<dbReference type="KEGG" id="mst:Msp_1193"/>
<dbReference type="eggNOG" id="arCOG00102">
    <property type="taxonomic scope" value="Archaea"/>
</dbReference>
<dbReference type="HOGENOM" id="CLU_001031_3_1_2"/>
<dbReference type="OrthoDB" id="6486at2157"/>
<dbReference type="UniPathway" id="UPA00074">
    <property type="reaction ID" value="UER00128"/>
</dbReference>
<dbReference type="Proteomes" id="UP000001931">
    <property type="component" value="Chromosome"/>
</dbReference>
<dbReference type="GO" id="GO:0005737">
    <property type="term" value="C:cytoplasm"/>
    <property type="evidence" value="ECO:0007669"/>
    <property type="project" value="UniProtKB-SubCell"/>
</dbReference>
<dbReference type="GO" id="GO:0005524">
    <property type="term" value="F:ATP binding"/>
    <property type="evidence" value="ECO:0007669"/>
    <property type="project" value="UniProtKB-KW"/>
</dbReference>
<dbReference type="GO" id="GO:0004359">
    <property type="term" value="F:glutaminase activity"/>
    <property type="evidence" value="ECO:0007669"/>
    <property type="project" value="UniProtKB-EC"/>
</dbReference>
<dbReference type="GO" id="GO:0004642">
    <property type="term" value="F:phosphoribosylformylglycinamidine synthase activity"/>
    <property type="evidence" value="ECO:0007669"/>
    <property type="project" value="UniProtKB-UniRule"/>
</dbReference>
<dbReference type="GO" id="GO:0006189">
    <property type="term" value="P:'de novo' IMP biosynthetic process"/>
    <property type="evidence" value="ECO:0007669"/>
    <property type="project" value="UniProtKB-UniRule"/>
</dbReference>
<dbReference type="CDD" id="cd01740">
    <property type="entry name" value="GATase1_FGAR_AT"/>
    <property type="match status" value="1"/>
</dbReference>
<dbReference type="Gene3D" id="3.40.50.880">
    <property type="match status" value="1"/>
</dbReference>
<dbReference type="HAMAP" id="MF_00421">
    <property type="entry name" value="PurQ"/>
    <property type="match status" value="1"/>
</dbReference>
<dbReference type="InterPro" id="IPR029062">
    <property type="entry name" value="Class_I_gatase-like"/>
</dbReference>
<dbReference type="InterPro" id="IPR010075">
    <property type="entry name" value="PRibForGlyAmidine_synth_PurQ"/>
</dbReference>
<dbReference type="NCBIfam" id="TIGR01737">
    <property type="entry name" value="FGAM_synth_I"/>
    <property type="match status" value="1"/>
</dbReference>
<dbReference type="NCBIfam" id="NF002957">
    <property type="entry name" value="PRK03619.1"/>
    <property type="match status" value="1"/>
</dbReference>
<dbReference type="PANTHER" id="PTHR47552">
    <property type="entry name" value="PHOSPHORIBOSYLFORMYLGLYCINAMIDINE SYNTHASE SUBUNIT PURQ"/>
    <property type="match status" value="1"/>
</dbReference>
<dbReference type="PANTHER" id="PTHR47552:SF1">
    <property type="entry name" value="PHOSPHORIBOSYLFORMYLGLYCINAMIDINE SYNTHASE SUBUNIT PURQ"/>
    <property type="match status" value="1"/>
</dbReference>
<dbReference type="Pfam" id="PF13507">
    <property type="entry name" value="GATase_5"/>
    <property type="match status" value="1"/>
</dbReference>
<dbReference type="PIRSF" id="PIRSF001586">
    <property type="entry name" value="FGAM_synth_I"/>
    <property type="match status" value="1"/>
</dbReference>
<dbReference type="SMART" id="SM01211">
    <property type="entry name" value="GATase_5"/>
    <property type="match status" value="1"/>
</dbReference>
<dbReference type="SUPFAM" id="SSF52317">
    <property type="entry name" value="Class I glutamine amidotransferase-like"/>
    <property type="match status" value="1"/>
</dbReference>
<dbReference type="PROSITE" id="PS51273">
    <property type="entry name" value="GATASE_TYPE_1"/>
    <property type="match status" value="1"/>
</dbReference>
<name>PURQ_METST</name>
<protein>
    <recommendedName>
        <fullName evidence="1">Phosphoribosylformylglycinamidine synthase subunit PurQ</fullName>
        <shortName evidence="1">FGAM synthase</shortName>
        <ecNumber evidence="1">6.3.5.3</ecNumber>
    </recommendedName>
    <alternativeName>
        <fullName evidence="1">Formylglycinamide ribonucleotide amidotransferase subunit I</fullName>
        <shortName evidence="1">FGAR amidotransferase I</shortName>
        <shortName evidence="1">FGAR-AT I</shortName>
    </alternativeName>
    <alternativeName>
        <fullName evidence="1">Glutaminase PurQ</fullName>
        <ecNumber evidence="1">3.5.1.2</ecNumber>
    </alternativeName>
    <alternativeName>
        <fullName evidence="1">Phosphoribosylformylglycinamidine synthase subunit I</fullName>
    </alternativeName>
</protein>
<accession>Q2NF29</accession>
<evidence type="ECO:0000255" key="1">
    <source>
        <dbReference type="HAMAP-Rule" id="MF_00421"/>
    </source>
</evidence>
<organism>
    <name type="scientific">Methanosphaera stadtmanae (strain ATCC 43021 / DSM 3091 / JCM 11832 / MCB-3)</name>
    <dbReference type="NCBI Taxonomy" id="339860"/>
    <lineage>
        <taxon>Archaea</taxon>
        <taxon>Methanobacteriati</taxon>
        <taxon>Methanobacteriota</taxon>
        <taxon>Methanomada group</taxon>
        <taxon>Methanobacteria</taxon>
        <taxon>Methanobacteriales</taxon>
        <taxon>Methanobacteriaceae</taxon>
        <taxon>Methanosphaera</taxon>
    </lineage>
</organism>
<feature type="chain" id="PRO_0000252745" description="Phosphoribosylformylglycinamidine synthase subunit PurQ">
    <location>
        <begin position="1"/>
        <end position="221"/>
    </location>
</feature>
<feature type="domain" description="Glutamine amidotransferase type-1" evidence="1">
    <location>
        <begin position="8"/>
        <end position="221"/>
    </location>
</feature>
<feature type="active site" description="Nucleophile" evidence="1">
    <location>
        <position position="91"/>
    </location>
</feature>
<feature type="active site" evidence="1">
    <location>
        <position position="198"/>
    </location>
</feature>
<feature type="active site" evidence="1">
    <location>
        <position position="200"/>
    </location>
</feature>
<comment type="function">
    <text evidence="1">Part of the phosphoribosylformylglycinamidine synthase complex involved in the purines biosynthetic pathway. Catalyzes the ATP-dependent conversion of formylglycinamide ribonucleotide (FGAR) and glutamine to yield formylglycinamidine ribonucleotide (FGAM) and glutamate. The FGAM synthase complex is composed of three subunits. PurQ produces an ammonia molecule by converting glutamine to glutamate. PurL transfers the ammonia molecule to FGAR to form FGAM in an ATP-dependent manner. PurS interacts with PurQ and PurL and is thought to assist in the transfer of the ammonia molecule from PurQ to PurL.</text>
</comment>
<comment type="catalytic activity">
    <reaction evidence="1">
        <text>N(2)-formyl-N(1)-(5-phospho-beta-D-ribosyl)glycinamide + L-glutamine + ATP + H2O = 2-formamido-N(1)-(5-O-phospho-beta-D-ribosyl)acetamidine + L-glutamate + ADP + phosphate + H(+)</text>
        <dbReference type="Rhea" id="RHEA:17129"/>
        <dbReference type="ChEBI" id="CHEBI:15377"/>
        <dbReference type="ChEBI" id="CHEBI:15378"/>
        <dbReference type="ChEBI" id="CHEBI:29985"/>
        <dbReference type="ChEBI" id="CHEBI:30616"/>
        <dbReference type="ChEBI" id="CHEBI:43474"/>
        <dbReference type="ChEBI" id="CHEBI:58359"/>
        <dbReference type="ChEBI" id="CHEBI:147286"/>
        <dbReference type="ChEBI" id="CHEBI:147287"/>
        <dbReference type="ChEBI" id="CHEBI:456216"/>
        <dbReference type="EC" id="6.3.5.3"/>
    </reaction>
</comment>
<comment type="catalytic activity">
    <reaction evidence="1">
        <text>L-glutamine + H2O = L-glutamate + NH4(+)</text>
        <dbReference type="Rhea" id="RHEA:15889"/>
        <dbReference type="ChEBI" id="CHEBI:15377"/>
        <dbReference type="ChEBI" id="CHEBI:28938"/>
        <dbReference type="ChEBI" id="CHEBI:29985"/>
        <dbReference type="ChEBI" id="CHEBI:58359"/>
        <dbReference type="EC" id="3.5.1.2"/>
    </reaction>
</comment>
<comment type="pathway">
    <text evidence="1">Purine metabolism; IMP biosynthesis via de novo pathway; 5-amino-1-(5-phospho-D-ribosyl)imidazole from N(2)-formyl-N(1)-(5-phospho-D-ribosyl)glycinamide: step 1/2.</text>
</comment>
<comment type="subunit">
    <text evidence="1">Part of the FGAM synthase complex composed of 1 PurL, 1 PurQ and 2 PurS subunits.</text>
</comment>
<comment type="subcellular location">
    <subcellularLocation>
        <location evidence="1">Cytoplasm</location>
    </subcellularLocation>
</comment>